<dbReference type="EMBL" id="AE009439">
    <property type="protein sequence ID" value="AAM01904.1"/>
    <property type="molecule type" value="Genomic_DNA"/>
</dbReference>
<dbReference type="RefSeq" id="WP_011019059.1">
    <property type="nucleotide sequence ID" value="NC_003551.1"/>
</dbReference>
<dbReference type="SMR" id="Q8TXI4"/>
<dbReference type="STRING" id="190192.MK0690"/>
<dbReference type="PaxDb" id="190192-MK0690"/>
<dbReference type="EnsemblBacteria" id="AAM01904">
    <property type="protein sequence ID" value="AAM01904"/>
    <property type="gene ID" value="MK0690"/>
</dbReference>
<dbReference type="GeneID" id="1476791"/>
<dbReference type="KEGG" id="mka:MK0690"/>
<dbReference type="HOGENOM" id="CLU_004785_0_2_2"/>
<dbReference type="InParanoid" id="Q8TXI4"/>
<dbReference type="OrthoDB" id="25344at2157"/>
<dbReference type="Proteomes" id="UP000001826">
    <property type="component" value="Chromosome"/>
</dbReference>
<dbReference type="GO" id="GO:0005524">
    <property type="term" value="F:ATP binding"/>
    <property type="evidence" value="ECO:0007669"/>
    <property type="project" value="UniProtKB-UniRule"/>
</dbReference>
<dbReference type="GO" id="GO:0016887">
    <property type="term" value="F:ATP hydrolysis activity"/>
    <property type="evidence" value="ECO:0007669"/>
    <property type="project" value="UniProtKB-UniRule"/>
</dbReference>
<dbReference type="GO" id="GO:0008270">
    <property type="term" value="F:zinc ion binding"/>
    <property type="evidence" value="ECO:0007669"/>
    <property type="project" value="UniProtKB-UniRule"/>
</dbReference>
<dbReference type="GO" id="GO:0006302">
    <property type="term" value="P:double-strand break repair"/>
    <property type="evidence" value="ECO:0007669"/>
    <property type="project" value="UniProtKB-UniRule"/>
</dbReference>
<dbReference type="Gene3D" id="1.10.287.510">
    <property type="entry name" value="Helix hairpin bin"/>
    <property type="match status" value="1"/>
</dbReference>
<dbReference type="Gene3D" id="3.40.50.300">
    <property type="entry name" value="P-loop containing nucleotide triphosphate hydrolases"/>
    <property type="match status" value="2"/>
</dbReference>
<dbReference type="HAMAP" id="MF_00449">
    <property type="entry name" value="RAD50"/>
    <property type="match status" value="1"/>
</dbReference>
<dbReference type="InterPro" id="IPR003593">
    <property type="entry name" value="AAA+_ATPase"/>
</dbReference>
<dbReference type="InterPro" id="IPR003959">
    <property type="entry name" value="ATPase_AAA_core"/>
</dbReference>
<dbReference type="InterPro" id="IPR027417">
    <property type="entry name" value="P-loop_NTPase"/>
</dbReference>
<dbReference type="InterPro" id="IPR038729">
    <property type="entry name" value="Rad50/SbcC_AAA"/>
</dbReference>
<dbReference type="InterPro" id="IPR022982">
    <property type="entry name" value="Rad50_ATPase_archaeal"/>
</dbReference>
<dbReference type="InterPro" id="IPR013134">
    <property type="entry name" value="Zn_hook_RAD50"/>
</dbReference>
<dbReference type="PANTHER" id="PTHR32114">
    <property type="entry name" value="ABC TRANSPORTER ABCH.3"/>
    <property type="match status" value="1"/>
</dbReference>
<dbReference type="PANTHER" id="PTHR32114:SF2">
    <property type="entry name" value="ABC TRANSPORTER ABCH.3"/>
    <property type="match status" value="1"/>
</dbReference>
<dbReference type="Pfam" id="PF13304">
    <property type="entry name" value="AAA_21"/>
    <property type="match status" value="1"/>
</dbReference>
<dbReference type="Pfam" id="PF13476">
    <property type="entry name" value="AAA_23"/>
    <property type="match status" value="1"/>
</dbReference>
<dbReference type="Pfam" id="PF04423">
    <property type="entry name" value="Rad50_zn_hook"/>
    <property type="match status" value="1"/>
</dbReference>
<dbReference type="SMART" id="SM00382">
    <property type="entry name" value="AAA"/>
    <property type="match status" value="1"/>
</dbReference>
<dbReference type="SUPFAM" id="SSF52540">
    <property type="entry name" value="P-loop containing nucleoside triphosphate hydrolases"/>
    <property type="match status" value="2"/>
</dbReference>
<dbReference type="SUPFAM" id="SSF46579">
    <property type="entry name" value="Prefoldin"/>
    <property type="match status" value="1"/>
</dbReference>
<dbReference type="SUPFAM" id="SSF75712">
    <property type="entry name" value="Rad50 coiled-coil Zn hook"/>
    <property type="match status" value="1"/>
</dbReference>
<dbReference type="SUPFAM" id="SSF57997">
    <property type="entry name" value="Tropomyosin"/>
    <property type="match status" value="1"/>
</dbReference>
<dbReference type="PROSITE" id="PS51131">
    <property type="entry name" value="ZN_HOOK"/>
    <property type="match status" value="1"/>
</dbReference>
<sequence>MIERVKIENLRSHSSTEIEFREGINVLVGPNGAGKTTVLEAITLALFPRTFRSYDHMIREGERRAVVEVVFWGADGHKYKVRREFYRGGGQRNPRLYREEGDGWKVVASGRAEDVDREVMNALGGVDRDVFREAVYIRQGEIAKLVEATREERKRIVDRTLGLAEFKKAREQAHELLRVAEAKLETFRERVRDLKGSKKELKRVERELEELKREVKELEPEVEELKERLNELREAKREFERLEGELRLLENKIESLKGRRDDLRKLVEEGKEAERELQRLGDVPSKVRELENEEAELRRRIEELRNLLDDLRSLRNRLESAEEELEGVKRELEELKDEAGVDPERLVEFKDKIVEASERLRDLRREEELKRKLEKVSDELSELGDREETLQSEYEELQERLDEIQGELKEIRVKEKELLERIESLREAEGECPVCLRKLPRERAEKLLRDAEKELERLQGREEDLRKERRELKDRLESVRRELEGTKERMWRLRERREELERELEEIEELKEELADLSRELGVEEDRLPELRDLAVRAESLLRDLERRRGDVLRLEKELERTLDRCEKVIGRTPSGVEDVEEELRRLEEERDHVGQKLREAEGELERYHNLEEKVKRAREARKELKRIERDLEDAKGRLEQVERNLEGLRERYGSEDRLEEELESVEKKYERVRDKLSEVKGRLNGMEKRREELKKQVRKYREAKERKERLERVVEVLSLCKEVFRYSRDVAREKVLPAVEREASKILQDLSDRYGSLRIEDDGAVIRVSVPGGHFIEADRMSGGEKIIIGLALRLALAMVGSSFAPFIMLDEPTVHLDAEHRERLAQALRELDLGKGRVRQAIVVTHDEELEDAADELWRIENRAGESRVERYSG</sequence>
<accession>Q8TXI4</accession>
<feature type="chain" id="PRO_0000138655" description="DNA double-strand break repair Rad50 ATPase">
    <location>
        <begin position="1"/>
        <end position="876"/>
    </location>
</feature>
<feature type="domain" description="Zinc-hook" evidence="1">
    <location>
        <begin position="387"/>
        <end position="484"/>
    </location>
</feature>
<feature type="coiled-coil region" evidence="1">
    <location>
        <begin position="188"/>
        <end position="528"/>
    </location>
</feature>
<feature type="coiled-coil region" evidence="1">
    <location>
        <begin position="575"/>
        <end position="710"/>
    </location>
</feature>
<feature type="binding site" evidence="1">
    <location>
        <position position="11"/>
    </location>
    <ligand>
        <name>ATP</name>
        <dbReference type="ChEBI" id="CHEBI:30616"/>
    </ligand>
</feature>
<feature type="binding site" evidence="1">
    <location>
        <begin position="31"/>
        <end position="37"/>
    </location>
    <ligand>
        <name>ATP</name>
        <dbReference type="ChEBI" id="CHEBI:30616"/>
    </ligand>
</feature>
<feature type="binding site" evidence="1">
    <location>
        <position position="139"/>
    </location>
    <ligand>
        <name>ATP</name>
        <dbReference type="ChEBI" id="CHEBI:30616"/>
    </ligand>
</feature>
<feature type="binding site" evidence="1">
    <location>
        <position position="432"/>
    </location>
    <ligand>
        <name>Zn(2+)</name>
        <dbReference type="ChEBI" id="CHEBI:29105"/>
    </ligand>
</feature>
<feature type="binding site" evidence="1">
    <location>
        <position position="435"/>
    </location>
    <ligand>
        <name>Zn(2+)</name>
        <dbReference type="ChEBI" id="CHEBI:29105"/>
    </ligand>
</feature>
<protein>
    <recommendedName>
        <fullName evidence="1">DNA double-strand break repair Rad50 ATPase</fullName>
    </recommendedName>
</protein>
<proteinExistence type="inferred from homology"/>
<reference key="1">
    <citation type="journal article" date="2002" name="Proc. Natl. Acad. Sci. U.S.A.">
        <title>The complete genome of hyperthermophile Methanopyrus kandleri AV19 and monophyly of archaeal methanogens.</title>
        <authorList>
            <person name="Slesarev A.I."/>
            <person name="Mezhevaya K.V."/>
            <person name="Makarova K.S."/>
            <person name="Polushin N.N."/>
            <person name="Shcherbinina O.V."/>
            <person name="Shakhova V.V."/>
            <person name="Belova G.I."/>
            <person name="Aravind L."/>
            <person name="Natale D.A."/>
            <person name="Rogozin I.B."/>
            <person name="Tatusov R.L."/>
            <person name="Wolf Y.I."/>
            <person name="Stetter K.O."/>
            <person name="Malykh A.G."/>
            <person name="Koonin E.V."/>
            <person name="Kozyavkin S.A."/>
        </authorList>
    </citation>
    <scope>NUCLEOTIDE SEQUENCE [LARGE SCALE GENOMIC DNA]</scope>
    <source>
        <strain>AV19 / DSM 6324 / JCM 9639 / NBRC 100938</strain>
    </source>
</reference>
<keyword id="KW-0067">ATP-binding</keyword>
<keyword id="KW-0175">Coiled coil</keyword>
<keyword id="KW-0227">DNA damage</keyword>
<keyword id="KW-0234">DNA repair</keyword>
<keyword id="KW-0378">Hydrolase</keyword>
<keyword id="KW-0479">Metal-binding</keyword>
<keyword id="KW-0547">Nucleotide-binding</keyword>
<keyword id="KW-1185">Reference proteome</keyword>
<keyword id="KW-0862">Zinc</keyword>
<name>RAD50_METKA</name>
<gene>
    <name evidence="1" type="primary">rad50</name>
    <name type="synonym">sbcC</name>
    <name type="ordered locus">MK0690</name>
</gene>
<comment type="function">
    <text evidence="1">Part of the Rad50/Mre11 complex, which is involved in the early steps of DNA double-strand break (DSB) repair. The complex may facilitate opening of the processed DNA ends to aid in the recruitment of HerA and NurA. Rad50 controls the balance between DNA end bridging and DNA resection via ATP-dependent structural rearrangements of the Rad50/Mre11 complex.</text>
</comment>
<comment type="cofactor">
    <cofactor evidence="1">
        <name>Zn(2+)</name>
        <dbReference type="ChEBI" id="CHEBI:29105"/>
    </cofactor>
    <text evidence="1">Binds 1 zinc ion per homodimer.</text>
</comment>
<comment type="subunit">
    <text evidence="1">Homodimer. Forms a heterotetramer composed of two Mre11 subunits and two Rad50 subunits.</text>
</comment>
<comment type="domain">
    <text evidence="1">The two conserved Cys that bind zinc constitute the zinc-hook, which separates the large intramolecular coiled coil regions. The 2 Cys residues coordinate one molecule of zinc with the help of the 2 Cys residues of the zinc-hook of another Rad50 molecule, thereby forming a V-shaped homodimer.</text>
</comment>
<comment type="similarity">
    <text evidence="1">Belongs to the SMC family. RAD50 subfamily.</text>
</comment>
<organism>
    <name type="scientific">Methanopyrus kandleri (strain AV19 / DSM 6324 / JCM 9639 / NBRC 100938)</name>
    <dbReference type="NCBI Taxonomy" id="190192"/>
    <lineage>
        <taxon>Archaea</taxon>
        <taxon>Methanobacteriati</taxon>
        <taxon>Methanobacteriota</taxon>
        <taxon>Methanomada group</taxon>
        <taxon>Methanopyri</taxon>
        <taxon>Methanopyrales</taxon>
        <taxon>Methanopyraceae</taxon>
        <taxon>Methanopyrus</taxon>
    </lineage>
</organism>
<evidence type="ECO:0000255" key="1">
    <source>
        <dbReference type="HAMAP-Rule" id="MF_00449"/>
    </source>
</evidence>